<sequence length="167" mass="19762">SDFKNKLVISDFKYHCTFILGKDKVIKSVNVFELILFGIYKLSIFIPLFLIFIRLLATNILNFLFEVFKSIYSILKILFVVRFKPIRTHFLRPLSVSFIMISNNILLLISSLWYWLRVGKNLLLSTVGDGVGRFCKFRLPKPLLIDLVWNFLLFCFLCDRNFFIEFI</sequence>
<protein>
    <recommendedName>
        <fullName>Uncharacterized mitochondrial protein ORF2</fullName>
    </recommendedName>
</protein>
<geneLocation type="mitochondrion"/>
<geneLocation type="plasmid">
    <name>pAI2</name>
</geneLocation>
<reference key="1">
    <citation type="journal article" date="1989" name="Mol. Gen. Genet.">
        <title>In organello replication and viral affinity of linear, extrachromosomal DNA of the ascomycete Ascobolus immersus.</title>
        <authorList>
            <person name="Kempken F."/>
            <person name="Meinhardt F."/>
            <person name="Esser K."/>
        </authorList>
    </citation>
    <scope>NUCLEOTIDE SEQUENCE [GENOMIC DNA]</scope>
    <source>
        <strain>2/I</strain>
    </source>
</reference>
<evidence type="ECO:0000305" key="1"/>
<keyword id="KW-0496">Mitochondrion</keyword>
<keyword id="KW-0614">Plasmid</keyword>
<organism>
    <name type="scientific">Ascobolus immersus</name>
    <dbReference type="NCBI Taxonomy" id="5191"/>
    <lineage>
        <taxon>Eukaryota</taxon>
        <taxon>Fungi</taxon>
        <taxon>Dikarya</taxon>
        <taxon>Ascomycota</taxon>
        <taxon>Pezizomycotina</taxon>
        <taxon>Pezizomycetes</taxon>
        <taxon>Pezizales</taxon>
        <taxon>Ascobolaceae</taxon>
        <taxon>Ascobolus</taxon>
    </lineage>
</organism>
<name>YPA2_ASCIM</name>
<accession>P22375</accession>
<proteinExistence type="predicted"/>
<feature type="chain" id="PRO_0000196886" description="Uncharacterized mitochondrial protein ORF2">
    <location>
        <begin position="1"/>
        <end position="167"/>
    </location>
</feature>
<dbReference type="EMBL" id="X15982">
    <property type="protein sequence ID" value="CAA34107.1"/>
    <property type="molecule type" value="Genomic_DNA"/>
</dbReference>
<dbReference type="PIR" id="S05364">
    <property type="entry name" value="S05364"/>
</dbReference>
<dbReference type="SMR" id="P22375"/>
<dbReference type="GO" id="GO:0005739">
    <property type="term" value="C:mitochondrion"/>
    <property type="evidence" value="ECO:0007669"/>
    <property type="project" value="UniProtKB-SubCell"/>
</dbReference>
<comment type="subcellular location">
    <subcellularLocation>
        <location evidence="1">Mitochondrion</location>
    </subcellularLocation>
</comment>